<reference key="1">
    <citation type="journal article" date="1993" name="J. Biol. Chem.">
        <title>Striated muscle-type tropomyosin in a chordate smooth muscle, ascidian body-wall muscle.</title>
        <authorList>
            <person name="Meedel T.H."/>
            <person name="Hastings K.E.M."/>
        </authorList>
    </citation>
    <scope>NUCLEOTIDE SEQUENCE [MRNA]</scope>
    <source>
        <tissue>Body wall muscle</tissue>
    </source>
</reference>
<evidence type="ECO:0000250" key="1"/>
<evidence type="ECO:0000256" key="2">
    <source>
        <dbReference type="SAM" id="MobiDB-lite"/>
    </source>
</evidence>
<evidence type="ECO:0000305" key="3"/>
<name>TPM1_CIOIN</name>
<organism>
    <name type="scientific">Ciona intestinalis</name>
    <name type="common">Transparent sea squirt</name>
    <name type="synonym">Ascidia intestinalis</name>
    <dbReference type="NCBI Taxonomy" id="7719"/>
    <lineage>
        <taxon>Eukaryota</taxon>
        <taxon>Metazoa</taxon>
        <taxon>Chordata</taxon>
        <taxon>Tunicata</taxon>
        <taxon>Ascidiacea</taxon>
        <taxon>Phlebobranchia</taxon>
        <taxon>Cionidae</taxon>
        <taxon>Ciona</taxon>
    </lineage>
</organism>
<comment type="function">
    <text>The function of tropomyosin in smooth muscle and non-muscle cells is not clear.</text>
</comment>
<comment type="subunit">
    <text>Homodimer.</text>
</comment>
<comment type="tissue specificity">
    <text>Predominantly expressed in body wall muscle and heart, low in intestine, ovary and larval tail muscle.</text>
</comment>
<comment type="domain">
    <text>The molecule is in a coiled coil structure that is formed by 2 polypeptide chains. The sequence exhibits a prominent seven-residues periodicity.</text>
</comment>
<comment type="similarity">
    <text evidence="3">Belongs to the tropomyosin family.</text>
</comment>
<proteinExistence type="evidence at transcript level"/>
<accession>Q07068</accession>
<gene>
    <name type="primary">CTM1</name>
</gene>
<protein>
    <recommendedName>
        <fullName>Tropomyosin, smooth muscle/fibroblast CTM1</fullName>
    </recommendedName>
</protein>
<sequence length="284" mass="32230">MEAIKKKMTMLKLDKENAIDRAEQAETDKKSAEDKATGLEEELQGLQKRLKATEDELDTSQEKLRTAIENLENAEKKAADAEQEVASLNRRITLVEEELDRAQERLTISLSKLEEAEKAADESERGRKVIENRSLKDEERLEVQEIQLTEAKNIAEDADRKYVEVARKLVMVEAELERGEERAELAESKAIELEEELKIVANNLKSLEASAEKYAAKEGIFEEEIKTLSDKLKDSETRAEFAEKSVVKLEKNIDELEDSLYAEKCKIKAISEDMDVTLQGIGDL</sequence>
<keyword id="KW-0175">Coiled coil</keyword>
<keyword id="KW-1185">Reference proteome</keyword>
<keyword id="KW-0677">Repeat</keyword>
<dbReference type="EMBL" id="X64105">
    <property type="protein sequence ID" value="CAA45469.1"/>
    <property type="molecule type" value="mRNA"/>
</dbReference>
<dbReference type="PIR" id="A45488">
    <property type="entry name" value="A45488"/>
</dbReference>
<dbReference type="RefSeq" id="NP_001027710.1">
    <property type="nucleotide sequence ID" value="NM_001032538.1"/>
</dbReference>
<dbReference type="SMR" id="Q07068"/>
<dbReference type="STRING" id="7719.ENSCINP00000004783"/>
<dbReference type="GeneID" id="100185771"/>
<dbReference type="eggNOG" id="KOG1003">
    <property type="taxonomic scope" value="Eukaryota"/>
</dbReference>
<dbReference type="InParanoid" id="Q07068"/>
<dbReference type="OrthoDB" id="128924at2759"/>
<dbReference type="Proteomes" id="UP000008144">
    <property type="component" value="Unplaced"/>
</dbReference>
<dbReference type="GO" id="GO:0005884">
    <property type="term" value="C:actin filament"/>
    <property type="evidence" value="ECO:0000318"/>
    <property type="project" value="GO_Central"/>
</dbReference>
<dbReference type="GO" id="GO:0051015">
    <property type="term" value="F:actin filament binding"/>
    <property type="evidence" value="ECO:0000318"/>
    <property type="project" value="GO_Central"/>
</dbReference>
<dbReference type="GO" id="GO:0007015">
    <property type="term" value="P:actin filament organization"/>
    <property type="evidence" value="ECO:0000318"/>
    <property type="project" value="GO_Central"/>
</dbReference>
<dbReference type="GO" id="GO:0006936">
    <property type="term" value="P:muscle contraction"/>
    <property type="evidence" value="ECO:0000318"/>
    <property type="project" value="GO_Central"/>
</dbReference>
<dbReference type="FunFam" id="1.20.5.170:FF:000005">
    <property type="entry name" value="Tropomyosin alpha-1 chain"/>
    <property type="match status" value="1"/>
</dbReference>
<dbReference type="FunFam" id="1.20.5.170:FF:000001">
    <property type="entry name" value="Tropomyosin alpha-1 chain isoform 1"/>
    <property type="match status" value="1"/>
</dbReference>
<dbReference type="FunFam" id="1.20.5.340:FF:000001">
    <property type="entry name" value="Tropomyosin alpha-1 chain isoform 2"/>
    <property type="match status" value="1"/>
</dbReference>
<dbReference type="Gene3D" id="1.20.5.170">
    <property type="match status" value="2"/>
</dbReference>
<dbReference type="Gene3D" id="1.20.5.340">
    <property type="match status" value="1"/>
</dbReference>
<dbReference type="InterPro" id="IPR000533">
    <property type="entry name" value="Tropomyosin"/>
</dbReference>
<dbReference type="PANTHER" id="PTHR19269">
    <property type="entry name" value="TROPOMYOSIN"/>
    <property type="match status" value="1"/>
</dbReference>
<dbReference type="Pfam" id="PF00261">
    <property type="entry name" value="Tropomyosin"/>
    <property type="match status" value="1"/>
</dbReference>
<dbReference type="PRINTS" id="PR00194">
    <property type="entry name" value="TROPOMYOSIN"/>
</dbReference>
<dbReference type="SUPFAM" id="SSF57997">
    <property type="entry name" value="Tropomyosin"/>
    <property type="match status" value="1"/>
</dbReference>
<feature type="chain" id="PRO_0000205658" description="Tropomyosin, smooth muscle/fibroblast CTM1">
    <location>
        <begin position="1"/>
        <end position="284"/>
    </location>
</feature>
<feature type="region of interest" description="Disordered" evidence="2">
    <location>
        <begin position="18"/>
        <end position="38"/>
    </location>
</feature>
<feature type="coiled-coil region" evidence="1">
    <location>
        <begin position="1"/>
        <end position="284"/>
    </location>
</feature>
<feature type="sequence variant" description="May represent an allelic variant or a cloning artifact.">
    <original>I</original>
    <variation>N</variation>
    <location>
        <position position="191"/>
    </location>
</feature>